<keyword id="KW-0028">Amino-acid biosynthesis</keyword>
<keyword id="KW-0368">Histidine biosynthesis</keyword>
<keyword id="KW-0378">Hydrolase</keyword>
<keyword id="KW-0486">Methionine biosynthesis</keyword>
<keyword id="KW-0511">Multifunctional enzyme</keyword>
<keyword id="KW-0521">NADP</keyword>
<keyword id="KW-0554">One-carbon metabolism</keyword>
<keyword id="KW-0560">Oxidoreductase</keyword>
<keyword id="KW-0658">Purine biosynthesis</keyword>
<proteinExistence type="inferred from homology"/>
<protein>
    <recommendedName>
        <fullName evidence="1">Bifunctional protein FolD</fullName>
    </recommendedName>
    <domain>
        <recommendedName>
            <fullName evidence="1">Methylenetetrahydrofolate dehydrogenase</fullName>
            <ecNumber evidence="1">1.5.1.5</ecNumber>
        </recommendedName>
    </domain>
    <domain>
        <recommendedName>
            <fullName evidence="1">Methenyltetrahydrofolate cyclohydrolase</fullName>
            <ecNumber evidence="1">3.5.4.9</ecNumber>
        </recommendedName>
    </domain>
</protein>
<gene>
    <name evidence="1" type="primary">folD1</name>
    <name type="ordered locus">DET0668</name>
</gene>
<gene>
    <name evidence="1" type="primary">folD2</name>
    <name type="ordered locus">DET0702</name>
</gene>
<sequence length="296" mass="31283">MSAHIINGTEIAAAIREEIRSEVTALKAKHGIVPGLATVLVGDDPASHSYVDSKIKMCQNLGIYSEHHPLPQSATNEDLLTLIARLNADPKISGILVQVPLPVQISENLVLNAINPDKDVDGFHPVNVGRMCLGEPCFLPCTPHGVQELLIRSGIKIEGTHVVIVGRSNLVGKPLANILLQKAPGANATVTICHSGTKNLPLITSQADILVSAMGKPKFITADMVRQGAVVIDVGTTCIGYTPEGKRILSGDVDFEAVKEKAFAITPVPKGVGPMTIIMLMLNTLTAAKRAAGLVK</sequence>
<feature type="chain" id="PRO_0000268330" description="Bifunctional protein FolD">
    <location>
        <begin position="1"/>
        <end position="296"/>
    </location>
</feature>
<feature type="binding site" evidence="1">
    <location>
        <begin position="166"/>
        <end position="168"/>
    </location>
    <ligand>
        <name>NADP(+)</name>
        <dbReference type="ChEBI" id="CHEBI:58349"/>
    </ligand>
</feature>
<feature type="binding site" evidence="1">
    <location>
        <position position="195"/>
    </location>
    <ligand>
        <name>NADP(+)</name>
        <dbReference type="ChEBI" id="CHEBI:58349"/>
    </ligand>
</feature>
<feature type="binding site" evidence="1">
    <location>
        <position position="236"/>
    </location>
    <ligand>
        <name>NADP(+)</name>
        <dbReference type="ChEBI" id="CHEBI:58349"/>
    </ligand>
</feature>
<evidence type="ECO:0000255" key="1">
    <source>
        <dbReference type="HAMAP-Rule" id="MF_01576"/>
    </source>
</evidence>
<organism>
    <name type="scientific">Dehalococcoides mccartyi (strain ATCC BAA-2266 / KCTC 15142 / 195)</name>
    <name type="common">Dehalococcoides ethenogenes (strain 195)</name>
    <dbReference type="NCBI Taxonomy" id="243164"/>
    <lineage>
        <taxon>Bacteria</taxon>
        <taxon>Bacillati</taxon>
        <taxon>Chloroflexota</taxon>
        <taxon>Dehalococcoidia</taxon>
        <taxon>Dehalococcoidales</taxon>
        <taxon>Dehalococcoidaceae</taxon>
        <taxon>Dehalococcoides</taxon>
    </lineage>
</organism>
<reference key="1">
    <citation type="journal article" date="2005" name="Science">
        <title>Genome sequence of the PCE-dechlorinating bacterium Dehalococcoides ethenogenes.</title>
        <authorList>
            <person name="Seshadri R."/>
            <person name="Adrian L."/>
            <person name="Fouts D.E."/>
            <person name="Eisen J.A."/>
            <person name="Phillippy A.M."/>
            <person name="Methe B.A."/>
            <person name="Ward N.L."/>
            <person name="Nelson W.C."/>
            <person name="DeBoy R.T."/>
            <person name="Khouri H.M."/>
            <person name="Kolonay J.F."/>
            <person name="Dodson R.J."/>
            <person name="Daugherty S.C."/>
            <person name="Brinkac L.M."/>
            <person name="Sullivan S.A."/>
            <person name="Madupu R."/>
            <person name="Nelson K.E."/>
            <person name="Kang K.H."/>
            <person name="Impraim M."/>
            <person name="Tran K."/>
            <person name="Robinson J.M."/>
            <person name="Forberger H.A."/>
            <person name="Fraser C.M."/>
            <person name="Zinder S.H."/>
            <person name="Heidelberg J.F."/>
        </authorList>
    </citation>
    <scope>NUCLEOTIDE SEQUENCE [LARGE SCALE GENOMIC DNA]</scope>
    <source>
        <strain>ATCC BAA-2266 / KCTC 15142 / 195</strain>
    </source>
</reference>
<dbReference type="EC" id="1.5.1.5" evidence="1"/>
<dbReference type="EC" id="3.5.4.9" evidence="1"/>
<dbReference type="EMBL" id="CP000027">
    <property type="protein sequence ID" value="AAW40002.1"/>
    <property type="molecule type" value="Genomic_DNA"/>
</dbReference>
<dbReference type="EMBL" id="CP000027">
    <property type="protein sequence ID" value="AAW40075.1"/>
    <property type="molecule type" value="Genomic_DNA"/>
</dbReference>
<dbReference type="RefSeq" id="WP_010936443.1">
    <property type="nucleotide sequence ID" value="NC_002936.3"/>
</dbReference>
<dbReference type="SMR" id="Q3Z8K6"/>
<dbReference type="FunCoup" id="Q3Z8K6">
    <property type="interactions" value="269"/>
</dbReference>
<dbReference type="STRING" id="243164.DET0668"/>
<dbReference type="GeneID" id="3230038"/>
<dbReference type="KEGG" id="det:DET0668"/>
<dbReference type="KEGG" id="det:DET0702"/>
<dbReference type="PATRIC" id="fig|243164.10.peg.642"/>
<dbReference type="eggNOG" id="COG0190">
    <property type="taxonomic scope" value="Bacteria"/>
</dbReference>
<dbReference type="HOGENOM" id="CLU_034045_2_1_0"/>
<dbReference type="InParanoid" id="Q3Z8K6"/>
<dbReference type="UniPathway" id="UPA00193"/>
<dbReference type="Proteomes" id="UP000008289">
    <property type="component" value="Chromosome"/>
</dbReference>
<dbReference type="GO" id="GO:0005829">
    <property type="term" value="C:cytosol"/>
    <property type="evidence" value="ECO:0007669"/>
    <property type="project" value="TreeGrafter"/>
</dbReference>
<dbReference type="GO" id="GO:0004477">
    <property type="term" value="F:methenyltetrahydrofolate cyclohydrolase activity"/>
    <property type="evidence" value="ECO:0007669"/>
    <property type="project" value="UniProtKB-UniRule"/>
</dbReference>
<dbReference type="GO" id="GO:0004488">
    <property type="term" value="F:methylenetetrahydrofolate dehydrogenase (NADP+) activity"/>
    <property type="evidence" value="ECO:0007669"/>
    <property type="project" value="UniProtKB-UniRule"/>
</dbReference>
<dbReference type="GO" id="GO:0000105">
    <property type="term" value="P:L-histidine biosynthetic process"/>
    <property type="evidence" value="ECO:0007669"/>
    <property type="project" value="UniProtKB-KW"/>
</dbReference>
<dbReference type="GO" id="GO:0009086">
    <property type="term" value="P:methionine biosynthetic process"/>
    <property type="evidence" value="ECO:0007669"/>
    <property type="project" value="UniProtKB-KW"/>
</dbReference>
<dbReference type="GO" id="GO:0006164">
    <property type="term" value="P:purine nucleotide biosynthetic process"/>
    <property type="evidence" value="ECO:0007669"/>
    <property type="project" value="UniProtKB-KW"/>
</dbReference>
<dbReference type="GO" id="GO:0035999">
    <property type="term" value="P:tetrahydrofolate interconversion"/>
    <property type="evidence" value="ECO:0007669"/>
    <property type="project" value="UniProtKB-UniRule"/>
</dbReference>
<dbReference type="CDD" id="cd01080">
    <property type="entry name" value="NAD_bind_m-THF_DH_Cyclohyd"/>
    <property type="match status" value="1"/>
</dbReference>
<dbReference type="FunFam" id="3.40.50.720:FF:000189">
    <property type="entry name" value="Bifunctional protein FolD"/>
    <property type="match status" value="1"/>
</dbReference>
<dbReference type="FunFam" id="3.40.50.10860:FF:000005">
    <property type="entry name" value="C-1-tetrahydrofolate synthase, cytoplasmic, putative"/>
    <property type="match status" value="1"/>
</dbReference>
<dbReference type="Gene3D" id="3.40.50.10860">
    <property type="entry name" value="Leucine Dehydrogenase, chain A, domain 1"/>
    <property type="match status" value="1"/>
</dbReference>
<dbReference type="Gene3D" id="3.40.50.720">
    <property type="entry name" value="NAD(P)-binding Rossmann-like Domain"/>
    <property type="match status" value="1"/>
</dbReference>
<dbReference type="HAMAP" id="MF_01576">
    <property type="entry name" value="THF_DHG_CYH"/>
    <property type="match status" value="1"/>
</dbReference>
<dbReference type="InterPro" id="IPR046346">
    <property type="entry name" value="Aminoacid_DH-like_N_sf"/>
</dbReference>
<dbReference type="InterPro" id="IPR036291">
    <property type="entry name" value="NAD(P)-bd_dom_sf"/>
</dbReference>
<dbReference type="InterPro" id="IPR000672">
    <property type="entry name" value="THF_DH/CycHdrlase"/>
</dbReference>
<dbReference type="InterPro" id="IPR020630">
    <property type="entry name" value="THF_DH/CycHdrlase_cat_dom"/>
</dbReference>
<dbReference type="InterPro" id="IPR020867">
    <property type="entry name" value="THF_DH/CycHdrlase_CS"/>
</dbReference>
<dbReference type="InterPro" id="IPR020631">
    <property type="entry name" value="THF_DH/CycHdrlase_NAD-bd_dom"/>
</dbReference>
<dbReference type="PANTHER" id="PTHR48099:SF5">
    <property type="entry name" value="C-1-TETRAHYDROFOLATE SYNTHASE, CYTOPLASMIC"/>
    <property type="match status" value="1"/>
</dbReference>
<dbReference type="PANTHER" id="PTHR48099">
    <property type="entry name" value="C-1-TETRAHYDROFOLATE SYNTHASE, CYTOPLASMIC-RELATED"/>
    <property type="match status" value="1"/>
</dbReference>
<dbReference type="Pfam" id="PF00763">
    <property type="entry name" value="THF_DHG_CYH"/>
    <property type="match status" value="1"/>
</dbReference>
<dbReference type="Pfam" id="PF02882">
    <property type="entry name" value="THF_DHG_CYH_C"/>
    <property type="match status" value="1"/>
</dbReference>
<dbReference type="PRINTS" id="PR00085">
    <property type="entry name" value="THFDHDRGNASE"/>
</dbReference>
<dbReference type="SUPFAM" id="SSF53223">
    <property type="entry name" value="Aminoacid dehydrogenase-like, N-terminal domain"/>
    <property type="match status" value="1"/>
</dbReference>
<dbReference type="SUPFAM" id="SSF51735">
    <property type="entry name" value="NAD(P)-binding Rossmann-fold domains"/>
    <property type="match status" value="1"/>
</dbReference>
<dbReference type="PROSITE" id="PS00767">
    <property type="entry name" value="THF_DHG_CYH_2"/>
    <property type="match status" value="1"/>
</dbReference>
<comment type="function">
    <text evidence="1">Catalyzes the oxidation of 5,10-methylenetetrahydrofolate to 5,10-methenyltetrahydrofolate and then the hydrolysis of 5,10-methenyltetrahydrofolate to 10-formyltetrahydrofolate.</text>
</comment>
<comment type="catalytic activity">
    <reaction evidence="1">
        <text>(6R)-5,10-methylene-5,6,7,8-tetrahydrofolate + NADP(+) = (6R)-5,10-methenyltetrahydrofolate + NADPH</text>
        <dbReference type="Rhea" id="RHEA:22812"/>
        <dbReference type="ChEBI" id="CHEBI:15636"/>
        <dbReference type="ChEBI" id="CHEBI:57455"/>
        <dbReference type="ChEBI" id="CHEBI:57783"/>
        <dbReference type="ChEBI" id="CHEBI:58349"/>
        <dbReference type="EC" id="1.5.1.5"/>
    </reaction>
</comment>
<comment type="catalytic activity">
    <reaction evidence="1">
        <text>(6R)-5,10-methenyltetrahydrofolate + H2O = (6R)-10-formyltetrahydrofolate + H(+)</text>
        <dbReference type="Rhea" id="RHEA:23700"/>
        <dbReference type="ChEBI" id="CHEBI:15377"/>
        <dbReference type="ChEBI" id="CHEBI:15378"/>
        <dbReference type="ChEBI" id="CHEBI:57455"/>
        <dbReference type="ChEBI" id="CHEBI:195366"/>
        <dbReference type="EC" id="3.5.4.9"/>
    </reaction>
</comment>
<comment type="pathway">
    <text evidence="1">One-carbon metabolism; tetrahydrofolate interconversion.</text>
</comment>
<comment type="subunit">
    <text evidence="1">Homodimer.</text>
</comment>
<comment type="similarity">
    <text evidence="1">Belongs to the tetrahydrofolate dehydrogenase/cyclohydrolase family.</text>
</comment>
<accession>Q3Z8K6</accession>
<name>FOLD_DEHM1</name>